<reference key="1">
    <citation type="journal article" date="1999" name="Nature">
        <title>Sequence and analysis of chromosome 2 of the plant Arabidopsis thaliana.</title>
        <authorList>
            <person name="Lin X."/>
            <person name="Kaul S."/>
            <person name="Rounsley S.D."/>
            <person name="Shea T.P."/>
            <person name="Benito M.-I."/>
            <person name="Town C.D."/>
            <person name="Fujii C.Y."/>
            <person name="Mason T.M."/>
            <person name="Bowman C.L."/>
            <person name="Barnstead M.E."/>
            <person name="Feldblyum T.V."/>
            <person name="Buell C.R."/>
            <person name="Ketchum K.A."/>
            <person name="Lee J.J."/>
            <person name="Ronning C.M."/>
            <person name="Koo H.L."/>
            <person name="Moffat K.S."/>
            <person name="Cronin L.A."/>
            <person name="Shen M."/>
            <person name="Pai G."/>
            <person name="Van Aken S."/>
            <person name="Umayam L."/>
            <person name="Tallon L.J."/>
            <person name="Gill J.E."/>
            <person name="Adams M.D."/>
            <person name="Carrera A.J."/>
            <person name="Creasy T.H."/>
            <person name="Goodman H.M."/>
            <person name="Somerville C.R."/>
            <person name="Copenhaver G.P."/>
            <person name="Preuss D."/>
            <person name="Nierman W.C."/>
            <person name="White O."/>
            <person name="Eisen J.A."/>
            <person name="Salzberg S.L."/>
            <person name="Fraser C.M."/>
            <person name="Venter J.C."/>
        </authorList>
    </citation>
    <scope>NUCLEOTIDE SEQUENCE [LARGE SCALE GENOMIC DNA]</scope>
    <source>
        <strain>cv. Columbia</strain>
    </source>
</reference>
<reference key="2">
    <citation type="journal article" date="2017" name="Plant J.">
        <title>Araport11: a complete reannotation of the Arabidopsis thaliana reference genome.</title>
        <authorList>
            <person name="Cheng C.Y."/>
            <person name="Krishnakumar V."/>
            <person name="Chan A.P."/>
            <person name="Thibaud-Nissen F."/>
            <person name="Schobel S."/>
            <person name="Town C.D."/>
        </authorList>
    </citation>
    <scope>GENOME REANNOTATION</scope>
    <source>
        <strain>cv. Columbia</strain>
    </source>
</reference>
<reference key="3">
    <citation type="submission" date="2006-07" db="EMBL/GenBank/DDBJ databases">
        <title>Large-scale analysis of RIKEN Arabidopsis full-length (RAFL) cDNAs.</title>
        <authorList>
            <person name="Totoki Y."/>
            <person name="Seki M."/>
            <person name="Ishida J."/>
            <person name="Nakajima M."/>
            <person name="Enju A."/>
            <person name="Kamiya A."/>
            <person name="Narusaka M."/>
            <person name="Shin-i T."/>
            <person name="Nakagawa M."/>
            <person name="Sakamoto N."/>
            <person name="Oishi K."/>
            <person name="Kohara Y."/>
            <person name="Kobayashi M."/>
            <person name="Toyoda A."/>
            <person name="Sakaki Y."/>
            <person name="Sakurai T."/>
            <person name="Iida K."/>
            <person name="Akiyama K."/>
            <person name="Satou M."/>
            <person name="Toyoda T."/>
            <person name="Konagaya A."/>
            <person name="Carninci P."/>
            <person name="Kawai J."/>
            <person name="Hayashizaki Y."/>
            <person name="Shinozaki K."/>
        </authorList>
    </citation>
    <scope>NUCLEOTIDE SEQUENCE [LARGE SCALE MRNA]</scope>
    <source>
        <strain>cv. Columbia</strain>
    </source>
</reference>
<reference key="4">
    <citation type="journal article" date="2001" name="Plant Physiol.">
        <title>Molecular characterization of At5PTase1, an inositol phosphatase capable of terminating inositol trisphosphate signaling.</title>
        <authorList>
            <person name="Berdy S.E."/>
            <person name="Kudla J."/>
            <person name="Gruissem W."/>
            <person name="Gillaspy G.E."/>
        </authorList>
    </citation>
    <scope>GENE FAMILY</scope>
</reference>
<keyword id="KW-0025">Alternative splicing</keyword>
<keyword id="KW-0378">Hydrolase</keyword>
<keyword id="KW-1185">Reference proteome</keyword>
<accession>Q0WT19</accession>
<accession>Q9ZUS3</accession>
<gene>
    <name evidence="2" type="primary">IP5P8</name>
    <name evidence="3" type="ordered locus">At2g37440</name>
    <name evidence="4" type="ORF">F3G5.23</name>
</gene>
<protein>
    <recommendedName>
        <fullName evidence="2">Type I inositol polyphosphate 5-phosphatase 8</fullName>
        <shortName evidence="2">At5PTase8</shortName>
        <ecNumber evidence="2">3.1.3.-</ecNumber>
    </recommendedName>
</protein>
<dbReference type="EC" id="3.1.3.-" evidence="2"/>
<dbReference type="EMBL" id="AC005896">
    <property type="protein sequence ID" value="AAC98062.1"/>
    <property type="status" value="ALT_SEQ"/>
    <property type="molecule type" value="Genomic_DNA"/>
</dbReference>
<dbReference type="EMBL" id="CP002685">
    <property type="protein sequence ID" value="AEC09399.1"/>
    <property type="molecule type" value="Genomic_DNA"/>
</dbReference>
<dbReference type="EMBL" id="CP002685">
    <property type="protein sequence ID" value="ANM61598.1"/>
    <property type="molecule type" value="Genomic_DNA"/>
</dbReference>
<dbReference type="EMBL" id="AK227745">
    <property type="protein sequence ID" value="BAE99729.1"/>
    <property type="molecule type" value="mRNA"/>
</dbReference>
<dbReference type="PIR" id="G84792">
    <property type="entry name" value="G84792"/>
</dbReference>
<dbReference type="RefSeq" id="NP_001323804.1">
    <molecule id="Q0WT19-1"/>
    <property type="nucleotide sequence ID" value="NM_001336660.1"/>
</dbReference>
<dbReference type="RefSeq" id="NP_181280.3">
    <molecule id="Q0WT19-1"/>
    <property type="nucleotide sequence ID" value="NM_129299.4"/>
</dbReference>
<dbReference type="SMR" id="Q0WT19"/>
<dbReference type="FunCoup" id="Q0WT19">
    <property type="interactions" value="2636"/>
</dbReference>
<dbReference type="STRING" id="3702.Q0WT19"/>
<dbReference type="PaxDb" id="3702-AT2G37440.1"/>
<dbReference type="EnsemblPlants" id="AT2G37440.1">
    <molecule id="Q0WT19-1"/>
    <property type="protein sequence ID" value="AT2G37440.1"/>
    <property type="gene ID" value="AT2G37440"/>
</dbReference>
<dbReference type="EnsemblPlants" id="AT2G37440.3">
    <molecule id="Q0WT19-1"/>
    <property type="protein sequence ID" value="AT2G37440.3"/>
    <property type="gene ID" value="AT2G37440"/>
</dbReference>
<dbReference type="GeneID" id="818321"/>
<dbReference type="Gramene" id="AT2G37440.1">
    <molecule id="Q0WT19-1"/>
    <property type="protein sequence ID" value="AT2G37440.1"/>
    <property type="gene ID" value="AT2G37440"/>
</dbReference>
<dbReference type="Gramene" id="AT2G37440.3">
    <molecule id="Q0WT19-1"/>
    <property type="protein sequence ID" value="AT2G37440.3"/>
    <property type="gene ID" value="AT2G37440"/>
</dbReference>
<dbReference type="KEGG" id="ath:AT2G37440"/>
<dbReference type="Araport" id="AT2G37440"/>
<dbReference type="TAIR" id="AT2G37440"/>
<dbReference type="eggNOG" id="KOG0565">
    <property type="taxonomic scope" value="Eukaryota"/>
</dbReference>
<dbReference type="HOGENOM" id="CLU_011711_4_1_1"/>
<dbReference type="InParanoid" id="Q0WT19"/>
<dbReference type="OMA" id="NNAKPDH"/>
<dbReference type="OrthoDB" id="62798at2759"/>
<dbReference type="PhylomeDB" id="Q0WT19"/>
<dbReference type="PRO" id="PR:Q0WT19"/>
<dbReference type="Proteomes" id="UP000006548">
    <property type="component" value="Chromosome 2"/>
</dbReference>
<dbReference type="ExpressionAtlas" id="Q0WT19">
    <property type="expression patterns" value="baseline and differential"/>
</dbReference>
<dbReference type="GO" id="GO:0004445">
    <property type="term" value="F:inositol-polyphosphate 5-phosphatase activity"/>
    <property type="evidence" value="ECO:0007669"/>
    <property type="project" value="InterPro"/>
</dbReference>
<dbReference type="GO" id="GO:0046856">
    <property type="term" value="P:phosphatidylinositol dephosphorylation"/>
    <property type="evidence" value="ECO:0007669"/>
    <property type="project" value="InterPro"/>
</dbReference>
<dbReference type="Gene3D" id="3.60.10.10">
    <property type="entry name" value="Endonuclease/exonuclease/phosphatase"/>
    <property type="match status" value="1"/>
</dbReference>
<dbReference type="InterPro" id="IPR036691">
    <property type="entry name" value="Endo/exonu/phosph_ase_sf"/>
</dbReference>
<dbReference type="InterPro" id="IPR045849">
    <property type="entry name" value="IP5P_plant"/>
</dbReference>
<dbReference type="InterPro" id="IPR000300">
    <property type="entry name" value="IPPc"/>
</dbReference>
<dbReference type="PANTHER" id="PTHR45666:SF15">
    <property type="entry name" value="TYPE I INOSITOL POLYPHOSPHATE 5-PHOSPHATASE 8"/>
    <property type="match status" value="1"/>
</dbReference>
<dbReference type="PANTHER" id="PTHR45666">
    <property type="entry name" value="TYPE IV INOSITOL POLYPHOSPHATE 5-PHOSPHATASE 9"/>
    <property type="match status" value="1"/>
</dbReference>
<dbReference type="Pfam" id="PF22669">
    <property type="entry name" value="Exo_endo_phos2"/>
    <property type="match status" value="1"/>
</dbReference>
<dbReference type="SMART" id="SM00128">
    <property type="entry name" value="IPPc"/>
    <property type="match status" value="1"/>
</dbReference>
<dbReference type="SUPFAM" id="SSF56219">
    <property type="entry name" value="DNase I-like"/>
    <property type="match status" value="1"/>
</dbReference>
<proteinExistence type="evidence at transcript level"/>
<feature type="chain" id="PRO_0000433258" description="Type I inositol polyphosphate 5-phosphatase 8">
    <location>
        <begin position="1"/>
        <end position="479"/>
    </location>
</feature>
<feature type="region of interest" description="Catalytic 1" evidence="1">
    <location>
        <begin position="300"/>
        <end position="315"/>
    </location>
</feature>
<feature type="region of interest" description="Catalytic 2" evidence="1">
    <location>
        <begin position="379"/>
        <end position="394"/>
    </location>
</feature>
<sequence length="479" mass="54621">MGKILKSKSSWPRTVVRKWLNLRSGAYEFHSDYPVKGMEPRRKSCSDMIVPENFQGWLGQGNGDLKHSTGEQHVTRVDDKLDLKMFVGTWNVGGKSPHEGLDLKDWLKSPADADIYVLGFQEIVPLNAGNVLGAEDNGPAAKWLSLIREALNNTNNLSPNELEHTKSSQQPRFSFSGLSDDTPIPCNSTPPRGYSLAASKQMVGIFLCVWVRDDLRKRITNLKVSCVGRGIMGYLGNKGSVSISMSLHETSLCFVCTHLTSGEKEGDELRRNLDVTEIFKRTRFSRSSKDSRPETIMDHDKVIWLGDLNYRLRASSDLHEQLRNHDWESLLEKDQLKIEQRAGRIFKGWEEGKIYFAPTYKYRINSDNYVVQTEKSKEKRRTPAWCDRILWKGDGMKQLWYVRGESKFSDHRPVQSLFSVHIDLKNQSNRKTKPVNQNHRPNPVLTYTCHGKVQAEEILLLTRAQSCIDTLPRLISSAS</sequence>
<organism>
    <name type="scientific">Arabidopsis thaliana</name>
    <name type="common">Mouse-ear cress</name>
    <dbReference type="NCBI Taxonomy" id="3702"/>
    <lineage>
        <taxon>Eukaryota</taxon>
        <taxon>Viridiplantae</taxon>
        <taxon>Streptophyta</taxon>
        <taxon>Embryophyta</taxon>
        <taxon>Tracheophyta</taxon>
        <taxon>Spermatophyta</taxon>
        <taxon>Magnoliopsida</taxon>
        <taxon>eudicotyledons</taxon>
        <taxon>Gunneridae</taxon>
        <taxon>Pentapetalae</taxon>
        <taxon>rosids</taxon>
        <taxon>malvids</taxon>
        <taxon>Brassicales</taxon>
        <taxon>Brassicaceae</taxon>
        <taxon>Camelineae</taxon>
        <taxon>Arabidopsis</taxon>
    </lineage>
</organism>
<comment type="alternative products">
    <event type="alternative splicing"/>
    <isoform>
        <id>Q0WT19-1</id>
        <name>1</name>
        <sequence type="displayed"/>
    </isoform>
    <text>A number of isoforms are produced. According to EST sequences.</text>
</comment>
<comment type="similarity">
    <text evidence="2">Belongs to the inositol polyphosphate 5-phosphatase family.</text>
</comment>
<comment type="sequence caution" evidence="2">
    <conflict type="erroneous gene model prediction">
        <sequence resource="EMBL-CDS" id="AAC98062"/>
    </conflict>
</comment>
<name>IP5P8_ARATH</name>
<evidence type="ECO:0000250" key="1">
    <source>
        <dbReference type="UniProtKB" id="Q84MA2"/>
    </source>
</evidence>
<evidence type="ECO:0000305" key="2"/>
<evidence type="ECO:0000312" key="3">
    <source>
        <dbReference type="Araport" id="AT2G37440"/>
    </source>
</evidence>
<evidence type="ECO:0000312" key="4">
    <source>
        <dbReference type="EMBL" id="AAC98062.1"/>
    </source>
</evidence>